<organism>
    <name type="scientific">Salmonella typhimurium (strain LT2 / SGSC1412 / ATCC 700720)</name>
    <dbReference type="NCBI Taxonomy" id="99287"/>
    <lineage>
        <taxon>Bacteria</taxon>
        <taxon>Pseudomonadati</taxon>
        <taxon>Pseudomonadota</taxon>
        <taxon>Gammaproteobacteria</taxon>
        <taxon>Enterobacterales</taxon>
        <taxon>Enterobacteriaceae</taxon>
        <taxon>Salmonella</taxon>
    </lineage>
</organism>
<evidence type="ECO:0000255" key="1">
    <source>
        <dbReference type="HAMAP-Rule" id="MF_00989"/>
    </source>
</evidence>
<evidence type="ECO:0000305" key="2"/>
<reference key="1">
    <citation type="journal article" date="1985" name="Gene">
        <title>The araBAD operon of Salmonella typhimurium LT2. III. Nucleotide sequence of araD and its flanking regions, and primary structure of its product, L-ribulose-5-phosphate 4-epimerase.</title>
        <authorList>
            <person name="Lin H.-C."/>
            <person name="Lei S.-P."/>
            <person name="Studnicka G."/>
            <person name="Wilcox G."/>
        </authorList>
    </citation>
    <scope>NUCLEOTIDE SEQUENCE [GENOMIC DNA]</scope>
    <source>
        <strain>LT2</strain>
    </source>
</reference>
<reference key="2">
    <citation type="journal article" date="2001" name="Nature">
        <title>Complete genome sequence of Salmonella enterica serovar Typhimurium LT2.</title>
        <authorList>
            <person name="McClelland M."/>
            <person name="Sanderson K.E."/>
            <person name="Spieth J."/>
            <person name="Clifton S.W."/>
            <person name="Latreille P."/>
            <person name="Courtney L."/>
            <person name="Porwollik S."/>
            <person name="Ali J."/>
            <person name="Dante M."/>
            <person name="Du F."/>
            <person name="Hou S."/>
            <person name="Layman D."/>
            <person name="Leonard S."/>
            <person name="Nguyen C."/>
            <person name="Scott K."/>
            <person name="Holmes A."/>
            <person name="Grewal N."/>
            <person name="Mulvaney E."/>
            <person name="Ryan E."/>
            <person name="Sun H."/>
            <person name="Florea L."/>
            <person name="Miller W."/>
            <person name="Stoneking T."/>
            <person name="Nhan M."/>
            <person name="Waterston R."/>
            <person name="Wilson R.K."/>
        </authorList>
    </citation>
    <scope>NUCLEOTIDE SEQUENCE [LARGE SCALE GENOMIC DNA]</scope>
    <source>
        <strain>LT2 / SGSC1412 / ATCC 700720</strain>
    </source>
</reference>
<feature type="chain" id="PRO_0000162920" description="L-ribulose-5-phosphate 4-epimerase">
    <location>
        <begin position="1"/>
        <end position="231"/>
    </location>
</feature>
<feature type="active site" description="Proton donor/acceptor" evidence="1">
    <location>
        <position position="120"/>
    </location>
</feature>
<feature type="active site" description="Proton donor/acceptor" evidence="1">
    <location>
        <position position="229"/>
    </location>
</feature>
<feature type="binding site" evidence="1">
    <location>
        <begin position="27"/>
        <end position="28"/>
    </location>
    <ligand>
        <name>substrate</name>
    </ligand>
</feature>
<feature type="binding site" evidence="1">
    <location>
        <begin position="44"/>
        <end position="45"/>
    </location>
    <ligand>
        <name>substrate</name>
    </ligand>
</feature>
<feature type="binding site" evidence="1">
    <location>
        <begin position="74"/>
        <end position="75"/>
    </location>
    <ligand>
        <name>substrate</name>
    </ligand>
</feature>
<feature type="binding site" evidence="1">
    <location>
        <position position="76"/>
    </location>
    <ligand>
        <name>Zn(2+)</name>
        <dbReference type="ChEBI" id="CHEBI:29105"/>
    </ligand>
</feature>
<feature type="binding site" evidence="1">
    <location>
        <position position="95"/>
    </location>
    <ligand>
        <name>Zn(2+)</name>
        <dbReference type="ChEBI" id="CHEBI:29105"/>
    </ligand>
</feature>
<feature type="binding site" evidence="1">
    <location>
        <position position="97"/>
    </location>
    <ligand>
        <name>Zn(2+)</name>
        <dbReference type="ChEBI" id="CHEBI:29105"/>
    </ligand>
</feature>
<feature type="binding site" evidence="1">
    <location>
        <position position="171"/>
    </location>
    <ligand>
        <name>Zn(2+)</name>
        <dbReference type="ChEBI" id="CHEBI:29105"/>
    </ligand>
</feature>
<comment type="function">
    <text evidence="1">Involved in the degradation of L-arabinose. Catalyzes the interconversion of L-ribulose 5-phosphate (LRu5P) and D-xylulose 5-phosphate (D-Xu5P) via a retroaldol/aldol mechanism (carbon-carbon bond cleavage analogous to a class II aldolase reaction).</text>
</comment>
<comment type="catalytic activity">
    <reaction evidence="1">
        <text>L-ribulose 5-phosphate = D-xylulose 5-phosphate</text>
        <dbReference type="Rhea" id="RHEA:22368"/>
        <dbReference type="ChEBI" id="CHEBI:57737"/>
        <dbReference type="ChEBI" id="CHEBI:58226"/>
        <dbReference type="EC" id="5.1.3.4"/>
    </reaction>
</comment>
<comment type="cofactor">
    <cofactor evidence="1">
        <name>Zn(2+)</name>
        <dbReference type="ChEBI" id="CHEBI:29105"/>
    </cofactor>
    <text evidence="1">Binds 1 zinc ion per subunit.</text>
</comment>
<comment type="pathway">
    <text evidence="1">Carbohydrate degradation; L-arabinose degradation via L-ribulose; D-xylulose 5-phosphate from L-arabinose (bacterial route): step 3/3.</text>
</comment>
<comment type="subunit">
    <text evidence="1">Homotetramer.</text>
</comment>
<comment type="similarity">
    <text evidence="1">Belongs to the aldolase class II family. AraD/FucA subfamily.</text>
</comment>
<comment type="sequence caution" evidence="2">
    <conflict type="frameshift">
        <sequence resource="EMBL-CDS" id="AAA27025"/>
    </conflict>
</comment>
<keyword id="KW-0054">Arabinose catabolism</keyword>
<keyword id="KW-0119">Carbohydrate metabolism</keyword>
<keyword id="KW-0413">Isomerase</keyword>
<keyword id="KW-0479">Metal-binding</keyword>
<keyword id="KW-1185">Reference proteome</keyword>
<keyword id="KW-0862">Zinc</keyword>
<sequence length="231" mass="25531">MLEDLKRQVLEANLALPKHNLVTLTWGNVSAVDRERGVLVIKPSGVDYSVMTADDMVVVSLESGEVVEGHKKPSSDTPTHRLLYQAFPTIGGIVHTHSRHATIWAQAGQPIPATGTTHADYFYGTIPCTRKMTEAEINGEYEWETGNVIVETFEKQGIDAAQMPGVLVHSHGPFAWGKNAEDAVHNAIVLEEVAYMGIFCRQLAPQLPDMQQSLLDKHYLRKHGAKAYYGQ</sequence>
<accession>P06190</accession>
<protein>
    <recommendedName>
        <fullName evidence="1">L-ribulose-5-phosphate 4-epimerase</fullName>
        <ecNumber evidence="1">5.1.3.4</ecNumber>
    </recommendedName>
    <alternativeName>
        <fullName evidence="1">Phosphoribulose isomerase</fullName>
    </alternativeName>
</protein>
<gene>
    <name evidence="1" type="primary">araD</name>
    <name type="ordered locus">STM0101</name>
</gene>
<proteinExistence type="inferred from homology"/>
<name>ARAD_SALTY</name>
<dbReference type="EC" id="5.1.3.4" evidence="1"/>
<dbReference type="EMBL" id="M11047">
    <property type="protein sequence ID" value="AAA27025.1"/>
    <property type="status" value="ALT_FRAME"/>
    <property type="molecule type" value="Genomic_DNA"/>
</dbReference>
<dbReference type="EMBL" id="AE006468">
    <property type="protein sequence ID" value="AAL19065.1"/>
    <property type="molecule type" value="Genomic_DNA"/>
</dbReference>
<dbReference type="PIR" id="A24986">
    <property type="entry name" value="ISEB4T"/>
</dbReference>
<dbReference type="RefSeq" id="NP_459106.1">
    <property type="nucleotide sequence ID" value="NC_003197.2"/>
</dbReference>
<dbReference type="RefSeq" id="WP_000888683.1">
    <property type="nucleotide sequence ID" value="NC_003197.2"/>
</dbReference>
<dbReference type="SMR" id="P06190"/>
<dbReference type="STRING" id="99287.STM0101"/>
<dbReference type="PaxDb" id="99287-STM0101"/>
<dbReference type="GeneID" id="1251619"/>
<dbReference type="KEGG" id="stm:STM0101"/>
<dbReference type="PATRIC" id="fig|99287.12.peg.104"/>
<dbReference type="HOGENOM" id="CLU_006033_5_0_6"/>
<dbReference type="OMA" id="PCVLTMM"/>
<dbReference type="PhylomeDB" id="P06190"/>
<dbReference type="BioCyc" id="SENT99287:STM0101-MONOMER"/>
<dbReference type="UniPathway" id="UPA00145">
    <property type="reaction ID" value="UER00567"/>
</dbReference>
<dbReference type="Proteomes" id="UP000001014">
    <property type="component" value="Chromosome"/>
</dbReference>
<dbReference type="GO" id="GO:0005829">
    <property type="term" value="C:cytosol"/>
    <property type="evidence" value="ECO:0000318"/>
    <property type="project" value="GO_Central"/>
</dbReference>
<dbReference type="GO" id="GO:0016832">
    <property type="term" value="F:aldehyde-lyase activity"/>
    <property type="evidence" value="ECO:0000318"/>
    <property type="project" value="GO_Central"/>
</dbReference>
<dbReference type="GO" id="GO:0008742">
    <property type="term" value="F:L-ribulose-phosphate 4-epimerase activity"/>
    <property type="evidence" value="ECO:0007669"/>
    <property type="project" value="UniProtKB-UniRule"/>
</dbReference>
<dbReference type="GO" id="GO:0008270">
    <property type="term" value="F:zinc ion binding"/>
    <property type="evidence" value="ECO:0007669"/>
    <property type="project" value="UniProtKB-UniRule"/>
</dbReference>
<dbReference type="GO" id="GO:0019569">
    <property type="term" value="P:L-arabinose catabolic process to xylulose 5-phosphate"/>
    <property type="evidence" value="ECO:0007669"/>
    <property type="project" value="UniProtKB-UniRule"/>
</dbReference>
<dbReference type="GO" id="GO:0019323">
    <property type="term" value="P:pentose catabolic process"/>
    <property type="evidence" value="ECO:0000318"/>
    <property type="project" value="GO_Central"/>
</dbReference>
<dbReference type="CDD" id="cd00398">
    <property type="entry name" value="Aldolase_II"/>
    <property type="match status" value="1"/>
</dbReference>
<dbReference type="FunFam" id="3.40.225.10:FF:000001">
    <property type="entry name" value="L-ribulose-5-phosphate 4-epimerase UlaF"/>
    <property type="match status" value="1"/>
</dbReference>
<dbReference type="Gene3D" id="3.40.225.10">
    <property type="entry name" value="Class II aldolase/adducin N-terminal domain"/>
    <property type="match status" value="1"/>
</dbReference>
<dbReference type="HAMAP" id="MF_00989">
    <property type="entry name" value="AraD_entero"/>
    <property type="match status" value="1"/>
</dbReference>
<dbReference type="InterPro" id="IPR050197">
    <property type="entry name" value="Aldolase_class_II_sugar_metab"/>
</dbReference>
<dbReference type="InterPro" id="IPR001303">
    <property type="entry name" value="Aldolase_II/adducin_N"/>
</dbReference>
<dbReference type="InterPro" id="IPR036409">
    <property type="entry name" value="Aldolase_II/adducin_N_sf"/>
</dbReference>
<dbReference type="InterPro" id="IPR004661">
    <property type="entry name" value="AraD"/>
</dbReference>
<dbReference type="InterPro" id="IPR033748">
    <property type="entry name" value="AraD_entero"/>
</dbReference>
<dbReference type="NCBIfam" id="TIGR00760">
    <property type="entry name" value="araD"/>
    <property type="match status" value="1"/>
</dbReference>
<dbReference type="NCBIfam" id="NF006047">
    <property type="entry name" value="PRK08193.1"/>
    <property type="match status" value="1"/>
</dbReference>
<dbReference type="NCBIfam" id="NF009002">
    <property type="entry name" value="PRK12347.1"/>
    <property type="match status" value="1"/>
</dbReference>
<dbReference type="NCBIfam" id="NF009003">
    <property type="entry name" value="PRK12348.1"/>
    <property type="match status" value="1"/>
</dbReference>
<dbReference type="PANTHER" id="PTHR22789">
    <property type="entry name" value="FUCULOSE PHOSPHATE ALDOLASE"/>
    <property type="match status" value="1"/>
</dbReference>
<dbReference type="PANTHER" id="PTHR22789:SF15">
    <property type="entry name" value="L-RIBULOSE-5-PHOSPHATE 4-EPIMERASE ARAD"/>
    <property type="match status" value="1"/>
</dbReference>
<dbReference type="Pfam" id="PF00596">
    <property type="entry name" value="Aldolase_II"/>
    <property type="match status" value="1"/>
</dbReference>
<dbReference type="SMART" id="SM01007">
    <property type="entry name" value="Aldolase_II"/>
    <property type="match status" value="1"/>
</dbReference>
<dbReference type="SUPFAM" id="SSF53639">
    <property type="entry name" value="AraD/HMP-PK domain-like"/>
    <property type="match status" value="1"/>
</dbReference>